<accession>Q2YBK3</accession>
<evidence type="ECO:0000255" key="1">
    <source>
        <dbReference type="HAMAP-Rule" id="MF_00532"/>
    </source>
</evidence>
<evidence type="ECO:0000305" key="2"/>
<protein>
    <recommendedName>
        <fullName evidence="1">Small ribosomal subunit protein uS9</fullName>
    </recommendedName>
    <alternativeName>
        <fullName evidence="2">30S ribosomal protein S9</fullName>
    </alternativeName>
</protein>
<sequence>MNGTYSYGTGRRKSAVARVFIKPGSGVITVNNKPVDEFFSRETGRMVVRQPLELTGNLDRFDILVNIHGGGESGQAGAVRHGITRALIDFDATLKPVLSNAGLVTRDAREVERKKVGLRKARRRKQFSKR</sequence>
<gene>
    <name evidence="1" type="primary">rpsI</name>
    <name type="ordered locus">Nmul_A0560</name>
</gene>
<keyword id="KW-1185">Reference proteome</keyword>
<keyword id="KW-0687">Ribonucleoprotein</keyword>
<keyword id="KW-0689">Ribosomal protein</keyword>
<proteinExistence type="inferred from homology"/>
<name>RS9_NITMU</name>
<dbReference type="EMBL" id="CP000103">
    <property type="protein sequence ID" value="ABB73868.1"/>
    <property type="molecule type" value="Genomic_DNA"/>
</dbReference>
<dbReference type="RefSeq" id="WP_011379922.1">
    <property type="nucleotide sequence ID" value="NC_007614.1"/>
</dbReference>
<dbReference type="SMR" id="Q2YBK3"/>
<dbReference type="STRING" id="323848.Nmul_A0560"/>
<dbReference type="KEGG" id="nmu:Nmul_A0560"/>
<dbReference type="eggNOG" id="COG0103">
    <property type="taxonomic scope" value="Bacteria"/>
</dbReference>
<dbReference type="HOGENOM" id="CLU_046483_2_1_4"/>
<dbReference type="OrthoDB" id="9803965at2"/>
<dbReference type="Proteomes" id="UP000002718">
    <property type="component" value="Chromosome"/>
</dbReference>
<dbReference type="GO" id="GO:0022627">
    <property type="term" value="C:cytosolic small ribosomal subunit"/>
    <property type="evidence" value="ECO:0007669"/>
    <property type="project" value="TreeGrafter"/>
</dbReference>
<dbReference type="GO" id="GO:0003723">
    <property type="term" value="F:RNA binding"/>
    <property type="evidence" value="ECO:0007669"/>
    <property type="project" value="TreeGrafter"/>
</dbReference>
<dbReference type="GO" id="GO:0003735">
    <property type="term" value="F:structural constituent of ribosome"/>
    <property type="evidence" value="ECO:0007669"/>
    <property type="project" value="InterPro"/>
</dbReference>
<dbReference type="GO" id="GO:0006412">
    <property type="term" value="P:translation"/>
    <property type="evidence" value="ECO:0007669"/>
    <property type="project" value="UniProtKB-UniRule"/>
</dbReference>
<dbReference type="FunFam" id="3.30.230.10:FF:000001">
    <property type="entry name" value="30S ribosomal protein S9"/>
    <property type="match status" value="1"/>
</dbReference>
<dbReference type="Gene3D" id="3.30.230.10">
    <property type="match status" value="1"/>
</dbReference>
<dbReference type="HAMAP" id="MF_00532_B">
    <property type="entry name" value="Ribosomal_uS9_B"/>
    <property type="match status" value="1"/>
</dbReference>
<dbReference type="InterPro" id="IPR020568">
    <property type="entry name" value="Ribosomal_Su5_D2-typ_SF"/>
</dbReference>
<dbReference type="InterPro" id="IPR000754">
    <property type="entry name" value="Ribosomal_uS9"/>
</dbReference>
<dbReference type="InterPro" id="IPR023035">
    <property type="entry name" value="Ribosomal_uS9_bac/plastid"/>
</dbReference>
<dbReference type="InterPro" id="IPR020574">
    <property type="entry name" value="Ribosomal_uS9_CS"/>
</dbReference>
<dbReference type="InterPro" id="IPR014721">
    <property type="entry name" value="Ribsml_uS5_D2-typ_fold_subgr"/>
</dbReference>
<dbReference type="NCBIfam" id="NF001099">
    <property type="entry name" value="PRK00132.1"/>
    <property type="match status" value="1"/>
</dbReference>
<dbReference type="PANTHER" id="PTHR21569">
    <property type="entry name" value="RIBOSOMAL PROTEIN S9"/>
    <property type="match status" value="1"/>
</dbReference>
<dbReference type="PANTHER" id="PTHR21569:SF1">
    <property type="entry name" value="SMALL RIBOSOMAL SUBUNIT PROTEIN US9M"/>
    <property type="match status" value="1"/>
</dbReference>
<dbReference type="Pfam" id="PF00380">
    <property type="entry name" value="Ribosomal_S9"/>
    <property type="match status" value="1"/>
</dbReference>
<dbReference type="SUPFAM" id="SSF54211">
    <property type="entry name" value="Ribosomal protein S5 domain 2-like"/>
    <property type="match status" value="1"/>
</dbReference>
<dbReference type="PROSITE" id="PS00360">
    <property type="entry name" value="RIBOSOMAL_S9"/>
    <property type="match status" value="1"/>
</dbReference>
<reference key="1">
    <citation type="submission" date="2005-08" db="EMBL/GenBank/DDBJ databases">
        <title>Complete sequence of chromosome 1 of Nitrosospira multiformis ATCC 25196.</title>
        <authorList>
            <person name="Copeland A."/>
            <person name="Lucas S."/>
            <person name="Lapidus A."/>
            <person name="Barry K."/>
            <person name="Detter J.C."/>
            <person name="Glavina T."/>
            <person name="Hammon N."/>
            <person name="Israni S."/>
            <person name="Pitluck S."/>
            <person name="Chain P."/>
            <person name="Malfatti S."/>
            <person name="Shin M."/>
            <person name="Vergez L."/>
            <person name="Schmutz J."/>
            <person name="Larimer F."/>
            <person name="Land M."/>
            <person name="Hauser L."/>
            <person name="Kyrpides N."/>
            <person name="Lykidis A."/>
            <person name="Richardson P."/>
        </authorList>
    </citation>
    <scope>NUCLEOTIDE SEQUENCE [LARGE SCALE GENOMIC DNA]</scope>
    <source>
        <strain>ATCC 25196 / NCIMB 11849 / C 71</strain>
    </source>
</reference>
<comment type="similarity">
    <text evidence="1">Belongs to the universal ribosomal protein uS9 family.</text>
</comment>
<feature type="chain" id="PRO_1000051269" description="Small ribosomal subunit protein uS9">
    <location>
        <begin position="1"/>
        <end position="130"/>
    </location>
</feature>
<organism>
    <name type="scientific">Nitrosospira multiformis (strain ATCC 25196 / NCIMB 11849 / C 71)</name>
    <dbReference type="NCBI Taxonomy" id="323848"/>
    <lineage>
        <taxon>Bacteria</taxon>
        <taxon>Pseudomonadati</taxon>
        <taxon>Pseudomonadota</taxon>
        <taxon>Betaproteobacteria</taxon>
        <taxon>Nitrosomonadales</taxon>
        <taxon>Nitrosomonadaceae</taxon>
        <taxon>Nitrosospira</taxon>
    </lineage>
</organism>